<gene>
    <name evidence="1" type="primary">nusB</name>
    <name type="ordered locus">cce_1623</name>
</gene>
<evidence type="ECO:0000255" key="1">
    <source>
        <dbReference type="HAMAP-Rule" id="MF_00073"/>
    </source>
</evidence>
<protein>
    <recommendedName>
        <fullName evidence="1">Transcription antitermination protein NusB</fullName>
    </recommendedName>
    <alternativeName>
        <fullName evidence="1">Antitermination factor NusB</fullName>
    </alternativeName>
</protein>
<comment type="function">
    <text evidence="1">Involved in transcription antitermination. Required for transcription of ribosomal RNA (rRNA) genes. Binds specifically to the boxA antiterminator sequence of the ribosomal RNA (rrn) operons.</text>
</comment>
<comment type="similarity">
    <text evidence="1">Belongs to the NusB family.</text>
</comment>
<proteinExistence type="inferred from homology"/>
<organism>
    <name type="scientific">Crocosphaera subtropica (strain ATCC 51142 / BH68)</name>
    <name type="common">Cyanothece sp. (strain ATCC 51142)</name>
    <dbReference type="NCBI Taxonomy" id="43989"/>
    <lineage>
        <taxon>Bacteria</taxon>
        <taxon>Bacillati</taxon>
        <taxon>Cyanobacteriota</taxon>
        <taxon>Cyanophyceae</taxon>
        <taxon>Oscillatoriophycideae</taxon>
        <taxon>Chroococcales</taxon>
        <taxon>Aphanothecaceae</taxon>
        <taxon>Crocosphaera</taxon>
        <taxon>Crocosphaera subtropica</taxon>
    </lineage>
</organism>
<keyword id="KW-1185">Reference proteome</keyword>
<keyword id="KW-0694">RNA-binding</keyword>
<keyword id="KW-0804">Transcription</keyword>
<keyword id="KW-0889">Transcription antitermination</keyword>
<keyword id="KW-0805">Transcription regulation</keyword>
<dbReference type="EMBL" id="CP000806">
    <property type="protein sequence ID" value="ACB50973.1"/>
    <property type="molecule type" value="Genomic_DNA"/>
</dbReference>
<dbReference type="RefSeq" id="WP_009544426.1">
    <property type="nucleotide sequence ID" value="NC_010546.1"/>
</dbReference>
<dbReference type="SMR" id="B1WXY6"/>
<dbReference type="STRING" id="43989.cce_1623"/>
<dbReference type="KEGG" id="cyt:cce_1623"/>
<dbReference type="eggNOG" id="COG0781">
    <property type="taxonomic scope" value="Bacteria"/>
</dbReference>
<dbReference type="HOGENOM" id="CLU_087843_0_0_3"/>
<dbReference type="OrthoDB" id="3528057at2"/>
<dbReference type="Proteomes" id="UP000001203">
    <property type="component" value="Chromosome circular"/>
</dbReference>
<dbReference type="GO" id="GO:0005829">
    <property type="term" value="C:cytosol"/>
    <property type="evidence" value="ECO:0007669"/>
    <property type="project" value="TreeGrafter"/>
</dbReference>
<dbReference type="GO" id="GO:0003723">
    <property type="term" value="F:RNA binding"/>
    <property type="evidence" value="ECO:0007669"/>
    <property type="project" value="UniProtKB-UniRule"/>
</dbReference>
<dbReference type="GO" id="GO:0006353">
    <property type="term" value="P:DNA-templated transcription termination"/>
    <property type="evidence" value="ECO:0007669"/>
    <property type="project" value="UniProtKB-UniRule"/>
</dbReference>
<dbReference type="GO" id="GO:0031564">
    <property type="term" value="P:transcription antitermination"/>
    <property type="evidence" value="ECO:0007669"/>
    <property type="project" value="UniProtKB-KW"/>
</dbReference>
<dbReference type="CDD" id="cd00619">
    <property type="entry name" value="Terminator_NusB"/>
    <property type="match status" value="1"/>
</dbReference>
<dbReference type="Gene3D" id="1.10.940.10">
    <property type="entry name" value="NusB-like"/>
    <property type="match status" value="1"/>
</dbReference>
<dbReference type="HAMAP" id="MF_00073">
    <property type="entry name" value="NusB"/>
    <property type="match status" value="1"/>
</dbReference>
<dbReference type="InterPro" id="IPR035926">
    <property type="entry name" value="NusB-like_sf"/>
</dbReference>
<dbReference type="InterPro" id="IPR011605">
    <property type="entry name" value="NusB_fam"/>
</dbReference>
<dbReference type="InterPro" id="IPR006027">
    <property type="entry name" value="NusB_RsmB_TIM44"/>
</dbReference>
<dbReference type="NCBIfam" id="TIGR01951">
    <property type="entry name" value="nusB"/>
    <property type="match status" value="1"/>
</dbReference>
<dbReference type="PANTHER" id="PTHR11078:SF3">
    <property type="entry name" value="ANTITERMINATION NUSB DOMAIN-CONTAINING PROTEIN"/>
    <property type="match status" value="1"/>
</dbReference>
<dbReference type="PANTHER" id="PTHR11078">
    <property type="entry name" value="N UTILIZATION SUBSTANCE PROTEIN B-RELATED"/>
    <property type="match status" value="1"/>
</dbReference>
<dbReference type="Pfam" id="PF01029">
    <property type="entry name" value="NusB"/>
    <property type="match status" value="1"/>
</dbReference>
<dbReference type="SUPFAM" id="SSF48013">
    <property type="entry name" value="NusB-like"/>
    <property type="match status" value="1"/>
</dbReference>
<accession>B1WXY6</accession>
<reference key="1">
    <citation type="journal article" date="2008" name="Proc. Natl. Acad. Sci. U.S.A.">
        <title>The genome of Cyanothece 51142, a unicellular diazotrophic cyanobacterium important in the marine nitrogen cycle.</title>
        <authorList>
            <person name="Welsh E.A."/>
            <person name="Liberton M."/>
            <person name="Stoeckel J."/>
            <person name="Loh T."/>
            <person name="Elvitigala T."/>
            <person name="Wang C."/>
            <person name="Wollam A."/>
            <person name="Fulton R.S."/>
            <person name="Clifton S.W."/>
            <person name="Jacobs J.M."/>
            <person name="Aurora R."/>
            <person name="Ghosh B.K."/>
            <person name="Sherman L.A."/>
            <person name="Smith R.D."/>
            <person name="Wilson R.K."/>
            <person name="Pakrasi H.B."/>
        </authorList>
    </citation>
    <scope>NUCLEOTIDE SEQUENCE [LARGE SCALE GENOMIC DNA]</scope>
    <source>
        <strain>ATCC 51142 / BH68</strain>
    </source>
</reference>
<feature type="chain" id="PRO_1000192429" description="Transcription antitermination protein NusB">
    <location>
        <begin position="1"/>
        <end position="209"/>
    </location>
</feature>
<sequence>MAPRQQPRRIARELALLSLSQIKGKAEKLDKVELNDLTLAAIRALTSEVQDTLETASAEVKRGHNQLFQYETKATTLESAKTMIKDALTLTQEAINRLANAIEFPEIIQLASQYEVREYAIELIGTINRRRKEIDEQLEAVLKDWQLKRLAKIDQDILRLAVAEILFLDVPEKVSINEAVELAKRYSDDDGYRFINGVLRRFTDHIKHN</sequence>
<name>NUSB_CROS5</name>